<dbReference type="EMBL" id="Z35428">
    <property type="protein sequence ID" value="CAA84590.1"/>
    <property type="molecule type" value="Genomic_DNA"/>
</dbReference>
<dbReference type="EMBL" id="AM942759">
    <property type="protein sequence ID" value="CAR43896.1"/>
    <property type="molecule type" value="Genomic_DNA"/>
</dbReference>
<dbReference type="RefSeq" id="WP_012368136.1">
    <property type="nucleotide sequence ID" value="NC_010554.1"/>
</dbReference>
<dbReference type="SMR" id="P53514"/>
<dbReference type="EnsemblBacteria" id="CAR43896">
    <property type="protein sequence ID" value="CAR43896"/>
    <property type="gene ID" value="PMI1878"/>
</dbReference>
<dbReference type="GeneID" id="6800853"/>
<dbReference type="KEGG" id="pmr:PMI1878"/>
<dbReference type="eggNOG" id="COG3188">
    <property type="taxonomic scope" value="Bacteria"/>
</dbReference>
<dbReference type="HOGENOM" id="CLU_009120_1_1_6"/>
<dbReference type="Proteomes" id="UP000008319">
    <property type="component" value="Chromosome"/>
</dbReference>
<dbReference type="GO" id="GO:0009279">
    <property type="term" value="C:cell outer membrane"/>
    <property type="evidence" value="ECO:0007669"/>
    <property type="project" value="UniProtKB-SubCell"/>
</dbReference>
<dbReference type="GO" id="GO:0015473">
    <property type="term" value="F:fimbrial usher porin activity"/>
    <property type="evidence" value="ECO:0007669"/>
    <property type="project" value="InterPro"/>
</dbReference>
<dbReference type="GO" id="GO:0009297">
    <property type="term" value="P:pilus assembly"/>
    <property type="evidence" value="ECO:0007669"/>
    <property type="project" value="InterPro"/>
</dbReference>
<dbReference type="Gene3D" id="2.60.40.2070">
    <property type="match status" value="1"/>
</dbReference>
<dbReference type="Gene3D" id="2.60.40.3110">
    <property type="match status" value="1"/>
</dbReference>
<dbReference type="Gene3D" id="3.10.20.410">
    <property type="match status" value="1"/>
</dbReference>
<dbReference type="Gene3D" id="2.60.40.2610">
    <property type="entry name" value="Outer membrane usher protein FimD, plug domain"/>
    <property type="match status" value="1"/>
</dbReference>
<dbReference type="InterPro" id="IPR000015">
    <property type="entry name" value="Fimb_usher"/>
</dbReference>
<dbReference type="InterPro" id="IPR018030">
    <property type="entry name" value="Fimbrial_membr_usher_CS"/>
</dbReference>
<dbReference type="InterPro" id="IPR042186">
    <property type="entry name" value="FimD_plug_dom"/>
</dbReference>
<dbReference type="InterPro" id="IPR025949">
    <property type="entry name" value="PapC-like_C"/>
</dbReference>
<dbReference type="InterPro" id="IPR043142">
    <property type="entry name" value="PapC-like_C_sf"/>
</dbReference>
<dbReference type="InterPro" id="IPR025885">
    <property type="entry name" value="PapC_N"/>
</dbReference>
<dbReference type="InterPro" id="IPR037224">
    <property type="entry name" value="PapC_N_sf"/>
</dbReference>
<dbReference type="PANTHER" id="PTHR30451">
    <property type="entry name" value="OUTER MEMBRANE USHER PROTEIN"/>
    <property type="match status" value="1"/>
</dbReference>
<dbReference type="PANTHER" id="PTHR30451:SF10">
    <property type="entry name" value="OUTER MEMBRANE USHER PROTEIN YFCU-RELATED"/>
    <property type="match status" value="1"/>
</dbReference>
<dbReference type="Pfam" id="PF13953">
    <property type="entry name" value="PapC_C"/>
    <property type="match status" value="1"/>
</dbReference>
<dbReference type="Pfam" id="PF13954">
    <property type="entry name" value="PapC_N"/>
    <property type="match status" value="1"/>
</dbReference>
<dbReference type="Pfam" id="PF00577">
    <property type="entry name" value="Usher"/>
    <property type="match status" value="1"/>
</dbReference>
<dbReference type="SUPFAM" id="SSF141729">
    <property type="entry name" value="FimD N-terminal domain-like"/>
    <property type="match status" value="1"/>
</dbReference>
<dbReference type="PROSITE" id="PS01151">
    <property type="entry name" value="FIMBRIAL_USHER"/>
    <property type="match status" value="1"/>
</dbReference>
<organism>
    <name type="scientific">Proteus mirabilis (strain HI4320)</name>
    <dbReference type="NCBI Taxonomy" id="529507"/>
    <lineage>
        <taxon>Bacteria</taxon>
        <taxon>Pseudomonadati</taxon>
        <taxon>Pseudomonadota</taxon>
        <taxon>Gammaproteobacteria</taxon>
        <taxon>Enterobacterales</taxon>
        <taxon>Morganellaceae</taxon>
        <taxon>Proteus</taxon>
    </lineage>
</organism>
<sequence length="828" mass="93108">MLIPYSPHTIWKTICATLLLSLAFFSQAEQDDSVEFNIHMLDAEDRDNVDLSRFSTSNYIIPGMYYLDIRLNGRDFPRQNINYIEVADNHSVACIDPTLLKKLTINQENQKYIKQISPDCFDISQLPGISIKNDGGVLDITLPRSLMKYEESDWTPPELWDSGVSGLIFDYTLTGTSTRPNKGNNNNTLTGYGQAGLNLGEWRLRAEYQGNYSSEYSSNNRFDWNQIYAYKPLPDLAAKLTVGETYLNSQIFDSFRFTGANLQSDERMLPPSLQGYAPEIHGIANTNAKVTVTQNGRLIYETTVPAGPFVINHLQNTVQGQLDVRVEEQNGKINEFQVQTANLPYMTRPGSVRFNTSLGQSSVNNHKMQGPLFYQGDFSWGMNNTWSLYGGTLLTAKDYNAWSLGIGHDMGRFGTLSGDITQSYSKTYDNEKINGMSFKLNYAKTFDEYHSTITFAGYRFSEKTFRSFSQYIDERYNGINNNGYEKEMYTITGNKTFWADDAEKSTTLYLSYRHQNYWDKNTQEQYGVTVSRNFSIMGIEQINTNLSAFRTQYKGNTDDTLSFNISLPLGSGRNIGYNLQDNNGKVTQMASYADNRDYNNLWRIRAGLSSDKKANTDGYYQHRSQYAEINANASYQQDNYLAVGATIKGGFTATRYGAALHSSSMTSSTARIMVDTDGVAGVPFNGQSTTTNRFGIGVLTDLTSYNNVDARIDVDKMDQDIETRKAIASTTLTEGAIGYYQFPVRQGERLMAVLQTTDNKYPPFGAEVTNQKGESIGMVMEEGLVYIAGVNLNESLNVIWNGKTQCSITIPAEITDPLKHQSLVCQDR</sequence>
<proteinExistence type="inferred from homology"/>
<name>PMFC_PROMH</name>
<protein>
    <recommendedName>
        <fullName>Outer membrane usher protein PmfC</fullName>
    </recommendedName>
</protein>
<gene>
    <name type="primary">pmfC</name>
    <name type="ordered locus">PMI1878</name>
</gene>
<keyword id="KW-0998">Cell outer membrane</keyword>
<keyword id="KW-1029">Fimbrium biogenesis</keyword>
<keyword id="KW-0472">Membrane</keyword>
<keyword id="KW-1185">Reference proteome</keyword>
<keyword id="KW-0732">Signal</keyword>
<keyword id="KW-0812">Transmembrane</keyword>
<keyword id="KW-1134">Transmembrane beta strand</keyword>
<keyword id="KW-0813">Transport</keyword>
<evidence type="ECO:0000250" key="1"/>
<evidence type="ECO:0000255" key="2"/>
<evidence type="ECO:0000305" key="3"/>
<feature type="signal peptide" evidence="2">
    <location>
        <begin position="1"/>
        <end position="28"/>
    </location>
</feature>
<feature type="chain" id="PRO_0000009325" description="Outer membrane usher protein PmfC">
    <location>
        <begin position="29"/>
        <end position="828"/>
    </location>
</feature>
<comment type="function">
    <text>Involved in the export and assembly of PMF fimbrial subunits across the outer membrane.</text>
</comment>
<comment type="subcellular location">
    <subcellularLocation>
        <location evidence="1">Cell outer membrane</location>
        <topology evidence="1">Multi-pass membrane protein</topology>
    </subcellularLocation>
</comment>
<comment type="similarity">
    <text evidence="3">Belongs to the fimbrial export usher family.</text>
</comment>
<reference key="1">
    <citation type="journal article" date="1994" name="Gene">
        <title>Genetic organization and complete sequence of the Proteus mirabilis pmf fimbrial operon.</title>
        <authorList>
            <person name="Massad G."/>
            <person name="Mobley H.L.T."/>
        </authorList>
    </citation>
    <scope>NUCLEOTIDE SEQUENCE [GENOMIC DNA]</scope>
</reference>
<reference key="2">
    <citation type="journal article" date="2008" name="J. Bacteriol.">
        <title>Complete genome sequence of uropathogenic Proteus mirabilis, a master of both adherence and motility.</title>
        <authorList>
            <person name="Pearson M.M."/>
            <person name="Sebaihia M."/>
            <person name="Churcher C."/>
            <person name="Quail M.A."/>
            <person name="Seshasayee A.S."/>
            <person name="Luscombe N.M."/>
            <person name="Abdellah Z."/>
            <person name="Arrosmith C."/>
            <person name="Atkin B."/>
            <person name="Chillingworth T."/>
            <person name="Hauser H."/>
            <person name="Jagels K."/>
            <person name="Moule S."/>
            <person name="Mungall K."/>
            <person name="Norbertczak H."/>
            <person name="Rabbinowitsch E."/>
            <person name="Walker D."/>
            <person name="Whithead S."/>
            <person name="Thomson N.R."/>
            <person name="Rather P.N."/>
            <person name="Parkhill J."/>
            <person name="Mobley H.L.T."/>
        </authorList>
    </citation>
    <scope>NUCLEOTIDE SEQUENCE [LARGE SCALE GENOMIC DNA]</scope>
    <source>
        <strain>HI4320</strain>
    </source>
</reference>
<accession>P53514</accession>
<accession>B4F037</accession>